<name>156R_IIV6</name>
<organism>
    <name type="scientific">Invertebrate iridescent virus 6</name>
    <name type="common">IIV-6</name>
    <name type="synonym">Chilo iridescent virus</name>
    <dbReference type="NCBI Taxonomy" id="176652"/>
    <lineage>
        <taxon>Viruses</taxon>
        <taxon>Varidnaviria</taxon>
        <taxon>Bamfordvirae</taxon>
        <taxon>Nucleocytoviricota</taxon>
        <taxon>Megaviricetes</taxon>
        <taxon>Pimascovirales</taxon>
        <taxon>Iridoviridae</taxon>
        <taxon>Betairidovirinae</taxon>
        <taxon>Iridovirus</taxon>
    </lineage>
</organism>
<proteinExistence type="predicted"/>
<protein>
    <recommendedName>
        <fullName>Uncharacterized protein 156R</fullName>
    </recommendedName>
</protein>
<accession>O55755</accession>
<sequence length="57" mass="6794">MNFLQNFCRSKFIVFERVTPFTHKIIHKHSHHQTSSFNPMPSEVSLHTSHNFPHTTF</sequence>
<gene>
    <name type="ORF">IIV6-156R</name>
</gene>
<dbReference type="EMBL" id="AF303741">
    <property type="protein sequence ID" value="AAB94466.1"/>
    <property type="molecule type" value="Genomic_DNA"/>
</dbReference>
<dbReference type="PIR" id="T03092">
    <property type="entry name" value="T03092"/>
</dbReference>
<dbReference type="RefSeq" id="NP_149619.1">
    <property type="nucleotide sequence ID" value="NC_003038.1"/>
</dbReference>
<dbReference type="KEGG" id="vg:1732993"/>
<dbReference type="Proteomes" id="UP000001359">
    <property type="component" value="Genome"/>
</dbReference>
<feature type="chain" id="PRO_0000378014" description="Uncharacterized protein 156R">
    <location>
        <begin position="1"/>
        <end position="57"/>
    </location>
</feature>
<feature type="region of interest" description="Disordered" evidence="1">
    <location>
        <begin position="31"/>
        <end position="57"/>
    </location>
</feature>
<feature type="compositionally biased region" description="Polar residues" evidence="1">
    <location>
        <begin position="33"/>
        <end position="57"/>
    </location>
</feature>
<organismHost>
    <name type="scientific">Acheta domesticus</name>
    <name type="common">House cricket</name>
    <dbReference type="NCBI Taxonomy" id="6997"/>
</organismHost>
<organismHost>
    <name type="scientific">Chilo suppressalis</name>
    <name type="common">Asiatic rice borer moth</name>
    <dbReference type="NCBI Taxonomy" id="168631"/>
</organismHost>
<organismHost>
    <name type="scientific">Gryllus bimaculatus</name>
    <name type="common">Two-spotted cricket</name>
    <dbReference type="NCBI Taxonomy" id="6999"/>
</organismHost>
<organismHost>
    <name type="scientific">Gryllus campestris</name>
    <dbReference type="NCBI Taxonomy" id="58607"/>
</organismHost>
<organismHost>
    <name type="scientific">Spodoptera frugiperda</name>
    <name type="common">Fall armyworm</name>
    <dbReference type="NCBI Taxonomy" id="7108"/>
</organismHost>
<reference key="1">
    <citation type="journal article" date="2001" name="Virology">
        <title>Analysis of the first complete DNA sequence of an invertebrate iridovirus: coding strategy of the genome of Chilo iridescent virus.</title>
        <authorList>
            <person name="Jakob N.J."/>
            <person name="Mueller K."/>
            <person name="Bahr U."/>
            <person name="Darai G."/>
        </authorList>
    </citation>
    <scope>NUCLEOTIDE SEQUENCE [LARGE SCALE GENOMIC DNA]</scope>
</reference>
<reference key="2">
    <citation type="journal article" date="2007" name="Virol. J.">
        <title>Comparative genomic analysis of the family Iridoviridae: re-annotating and defining the core set of iridovirus genes.</title>
        <authorList>
            <person name="Eaton H.E."/>
            <person name="Metcalf J."/>
            <person name="Penny E."/>
            <person name="Tcherepanov V."/>
            <person name="Upton C."/>
            <person name="Brunetti C.R."/>
        </authorList>
    </citation>
    <scope>GENOME REANNOTATION</scope>
</reference>
<evidence type="ECO:0000256" key="1">
    <source>
        <dbReference type="SAM" id="MobiDB-lite"/>
    </source>
</evidence>
<keyword id="KW-1185">Reference proteome</keyword>